<gene>
    <name type="primary">LMF1</name>
    <name type="synonym">C16orf26</name>
    <name type="synonym">TMEM112</name>
    <name type="ORF">HMFN1876</name>
    <name type="ORF">JFP11</name>
</gene>
<dbReference type="EMBL" id="AK022743">
    <property type="protein sequence ID" value="BAB14218.1"/>
    <property type="molecule type" value="mRNA"/>
</dbReference>
<dbReference type="EMBL" id="AK025955">
    <property type="protein sequence ID" value="BAB15295.1"/>
    <property type="status" value="ALT_INIT"/>
    <property type="molecule type" value="mRNA"/>
</dbReference>
<dbReference type="EMBL" id="AK093050">
    <property type="protein sequence ID" value="BAG52642.1"/>
    <property type="molecule type" value="mRNA"/>
</dbReference>
<dbReference type="EMBL" id="AE006465">
    <property type="protein sequence ID" value="AAK61259.1"/>
    <property type="molecule type" value="Genomic_DNA"/>
</dbReference>
<dbReference type="EMBL" id="AC009041">
    <property type="status" value="NOT_ANNOTATED_CDS"/>
    <property type="molecule type" value="Genomic_DNA"/>
</dbReference>
<dbReference type="EMBL" id="AL008727">
    <property type="status" value="NOT_ANNOTATED_CDS"/>
    <property type="molecule type" value="Genomic_DNA"/>
</dbReference>
<dbReference type="EMBL" id="AL031008">
    <property type="status" value="NOT_ANNOTATED_CDS"/>
    <property type="molecule type" value="Genomic_DNA"/>
</dbReference>
<dbReference type="EMBL" id="AL031716">
    <property type="status" value="NOT_ANNOTATED_CDS"/>
    <property type="molecule type" value="Genomic_DNA"/>
</dbReference>
<dbReference type="EMBL" id="KF456135">
    <property type="status" value="NOT_ANNOTATED_CDS"/>
    <property type="molecule type" value="Genomic_DNA"/>
</dbReference>
<dbReference type="EMBL" id="KF456139">
    <property type="status" value="NOT_ANNOTATED_CDS"/>
    <property type="molecule type" value="Genomic_DNA"/>
</dbReference>
<dbReference type="EMBL" id="KF456141">
    <property type="status" value="NOT_ANNOTATED_CDS"/>
    <property type="molecule type" value="Genomic_DNA"/>
</dbReference>
<dbReference type="EMBL" id="KF456144">
    <property type="status" value="NOT_ANNOTATED_CDS"/>
    <property type="molecule type" value="Genomic_DNA"/>
</dbReference>
<dbReference type="EMBL" id="Z93041">
    <property type="status" value="NOT_ANNOTATED_CDS"/>
    <property type="molecule type" value="Genomic_DNA"/>
</dbReference>
<dbReference type="EMBL" id="CH471112">
    <property type="protein sequence ID" value="EAW85700.1"/>
    <property type="molecule type" value="Genomic_DNA"/>
</dbReference>
<dbReference type="EMBL" id="AB075873">
    <property type="protein sequence ID" value="BAD38655.1"/>
    <property type="molecule type" value="mRNA"/>
</dbReference>
<dbReference type="EMBL" id="BC010738">
    <property type="protein sequence ID" value="AAH10738.2"/>
    <property type="molecule type" value="mRNA"/>
</dbReference>
<dbReference type="CCDS" id="CCDS45373.1">
    <molecule id="Q96S06-1"/>
</dbReference>
<dbReference type="RefSeq" id="NP_073610.2">
    <molecule id="Q96S06-1"/>
    <property type="nucleotide sequence ID" value="NM_022773.4"/>
</dbReference>
<dbReference type="RefSeq" id="XP_006720991.1">
    <property type="nucleotide sequence ID" value="XM_006720928.2"/>
</dbReference>
<dbReference type="SMR" id="Q96S06"/>
<dbReference type="BioGRID" id="122298">
    <property type="interactions" value="128"/>
</dbReference>
<dbReference type="FunCoup" id="Q96S06">
    <property type="interactions" value="218"/>
</dbReference>
<dbReference type="IntAct" id="Q96S06">
    <property type="interactions" value="35"/>
</dbReference>
<dbReference type="STRING" id="9606.ENSP00000262301"/>
<dbReference type="GlyGen" id="Q96S06">
    <property type="glycosylation" value="2 sites, 2 N-linked glycans (1 site), 1 O-linked glycan (1 site)"/>
</dbReference>
<dbReference type="iPTMnet" id="Q96S06"/>
<dbReference type="PhosphoSitePlus" id="Q96S06"/>
<dbReference type="BioMuta" id="LMF1"/>
<dbReference type="DMDM" id="74717262"/>
<dbReference type="jPOST" id="Q96S06"/>
<dbReference type="MassIVE" id="Q96S06"/>
<dbReference type="PaxDb" id="9606-ENSP00000262301"/>
<dbReference type="PeptideAtlas" id="Q96S06"/>
<dbReference type="ProteomicsDB" id="3625"/>
<dbReference type="ProteomicsDB" id="78050">
    <molecule id="Q96S06-1"/>
</dbReference>
<dbReference type="Pumba" id="Q96S06"/>
<dbReference type="Antibodypedia" id="5146">
    <property type="antibodies" value="43 antibodies from 16 providers"/>
</dbReference>
<dbReference type="DNASU" id="64788"/>
<dbReference type="Ensembl" id="ENST00000262301.16">
    <molecule id="Q96S06-1"/>
    <property type="protein sequence ID" value="ENSP00000262301.12"/>
    <property type="gene ID" value="ENSG00000103227.19"/>
</dbReference>
<dbReference type="Ensembl" id="ENST00000543238.5">
    <molecule id="Q96S06-2"/>
    <property type="protein sequence ID" value="ENSP00000437418.1"/>
    <property type="gene ID" value="ENSG00000103227.19"/>
</dbReference>
<dbReference type="GeneID" id="64788"/>
<dbReference type="KEGG" id="hsa:64788"/>
<dbReference type="MANE-Select" id="ENST00000262301.16">
    <property type="protein sequence ID" value="ENSP00000262301.12"/>
    <property type="RefSeq nucleotide sequence ID" value="NM_022773.4"/>
    <property type="RefSeq protein sequence ID" value="NP_073610.2"/>
</dbReference>
<dbReference type="UCSC" id="uc010bri.4">
    <property type="organism name" value="human"/>
</dbReference>
<dbReference type="UCSC" id="uc059otd.1">
    <molecule id="Q96S06-1"/>
    <property type="organism name" value="human"/>
</dbReference>
<dbReference type="AGR" id="HGNC:14154"/>
<dbReference type="CTD" id="64788"/>
<dbReference type="DisGeNET" id="64788"/>
<dbReference type="GeneCards" id="LMF1"/>
<dbReference type="HGNC" id="HGNC:14154">
    <property type="gene designation" value="LMF1"/>
</dbReference>
<dbReference type="HPA" id="ENSG00000103227">
    <property type="expression patterns" value="Low tissue specificity"/>
</dbReference>
<dbReference type="MalaCards" id="LMF1"/>
<dbReference type="MIM" id="246650">
    <property type="type" value="phenotype"/>
</dbReference>
<dbReference type="MIM" id="611761">
    <property type="type" value="gene"/>
</dbReference>
<dbReference type="neXtProt" id="NX_Q96S06"/>
<dbReference type="OpenTargets" id="ENSG00000103227"/>
<dbReference type="Orphanet" id="535453">
    <property type="disease" value="Familial lipase maturation factor 1 deficiency"/>
</dbReference>
<dbReference type="PharmGKB" id="PA25540"/>
<dbReference type="VEuPathDB" id="HostDB:ENSG00000103227"/>
<dbReference type="eggNOG" id="ENOG502QT4H">
    <property type="taxonomic scope" value="Eukaryota"/>
</dbReference>
<dbReference type="GeneTree" id="ENSGT00530000063702"/>
<dbReference type="HOGENOM" id="CLU_020557_2_0_1"/>
<dbReference type="InParanoid" id="Q96S06"/>
<dbReference type="OMA" id="NFAWLNW"/>
<dbReference type="OrthoDB" id="434126at2759"/>
<dbReference type="PAN-GO" id="Q96S06">
    <property type="GO annotations" value="2 GO annotations based on evolutionary models"/>
</dbReference>
<dbReference type="PhylomeDB" id="Q96S06"/>
<dbReference type="TreeFam" id="TF314339"/>
<dbReference type="PathwayCommons" id="Q96S06"/>
<dbReference type="Reactome" id="R-HSA-8963889">
    <property type="pathway name" value="Assembly of active LPL and LIPC lipase complexes"/>
</dbReference>
<dbReference type="SignaLink" id="Q96S06"/>
<dbReference type="BioGRID-ORCS" id="64788">
    <property type="hits" value="11 hits in 1142 CRISPR screens"/>
</dbReference>
<dbReference type="ChiTaRS" id="LMF1">
    <property type="organism name" value="human"/>
</dbReference>
<dbReference type="GeneWiki" id="TMEM112"/>
<dbReference type="GenomeRNAi" id="64788"/>
<dbReference type="Pharos" id="Q96S06">
    <property type="development level" value="Tbio"/>
</dbReference>
<dbReference type="PRO" id="PR:Q96S06"/>
<dbReference type="Proteomes" id="UP000005640">
    <property type="component" value="Chromosome 16"/>
</dbReference>
<dbReference type="RNAct" id="Q96S06">
    <property type="molecule type" value="protein"/>
</dbReference>
<dbReference type="Bgee" id="ENSG00000103227">
    <property type="expression patterns" value="Expressed in right uterine tube and 190 other cell types or tissues"/>
</dbReference>
<dbReference type="ExpressionAtlas" id="Q96S06">
    <property type="expression patterns" value="baseline and differential"/>
</dbReference>
<dbReference type="GO" id="GO:0005789">
    <property type="term" value="C:endoplasmic reticulum membrane"/>
    <property type="evidence" value="ECO:0000318"/>
    <property type="project" value="GO_Central"/>
</dbReference>
<dbReference type="GO" id="GO:0034382">
    <property type="term" value="P:chylomicron remnant clearance"/>
    <property type="evidence" value="ECO:0007669"/>
    <property type="project" value="Ensembl"/>
</dbReference>
<dbReference type="GO" id="GO:0006888">
    <property type="term" value="P:endoplasmic reticulum to Golgi vesicle-mediated transport"/>
    <property type="evidence" value="ECO:0007669"/>
    <property type="project" value="Ensembl"/>
</dbReference>
<dbReference type="GO" id="GO:0006486">
    <property type="term" value="P:protein glycosylation"/>
    <property type="evidence" value="ECO:0007669"/>
    <property type="project" value="Ensembl"/>
</dbReference>
<dbReference type="GO" id="GO:0051604">
    <property type="term" value="P:protein maturation"/>
    <property type="evidence" value="ECO:0000318"/>
    <property type="project" value="GO_Central"/>
</dbReference>
<dbReference type="GO" id="GO:0009306">
    <property type="term" value="P:protein secretion"/>
    <property type="evidence" value="ECO:0007669"/>
    <property type="project" value="Ensembl"/>
</dbReference>
<dbReference type="GO" id="GO:0090181">
    <property type="term" value="P:regulation of cholesterol metabolic process"/>
    <property type="evidence" value="ECO:0007669"/>
    <property type="project" value="Ensembl"/>
</dbReference>
<dbReference type="GO" id="GO:0090207">
    <property type="term" value="P:regulation of triglyceride metabolic process"/>
    <property type="evidence" value="ECO:0007669"/>
    <property type="project" value="Ensembl"/>
</dbReference>
<dbReference type="GO" id="GO:0006641">
    <property type="term" value="P:triglyceride metabolic process"/>
    <property type="evidence" value="ECO:0000315"/>
    <property type="project" value="UniProtKB"/>
</dbReference>
<dbReference type="InterPro" id="IPR009613">
    <property type="entry name" value="LMF"/>
</dbReference>
<dbReference type="PANTHER" id="PTHR14463">
    <property type="entry name" value="LIPASE MATURATION FACTOR"/>
    <property type="match status" value="1"/>
</dbReference>
<dbReference type="PANTHER" id="PTHR14463:SF10">
    <property type="entry name" value="LIPASE MATURATION FACTOR 1"/>
    <property type="match status" value="1"/>
</dbReference>
<dbReference type="Pfam" id="PF06762">
    <property type="entry name" value="LMF1"/>
    <property type="match status" value="1"/>
</dbReference>
<dbReference type="Pfam" id="PF25179">
    <property type="entry name" value="LMF1_C"/>
    <property type="match status" value="1"/>
</dbReference>
<keyword id="KW-0025">Alternative splicing</keyword>
<keyword id="KW-0143">Chaperone</keyword>
<keyword id="KW-0256">Endoplasmic reticulum</keyword>
<keyword id="KW-0472">Membrane</keyword>
<keyword id="KW-1267">Proteomics identification</keyword>
<keyword id="KW-1185">Reference proteome</keyword>
<keyword id="KW-0812">Transmembrane</keyword>
<keyword id="KW-1133">Transmembrane helix</keyword>
<evidence type="ECO:0000250" key="1">
    <source>
        <dbReference type="UniProtKB" id="Q3U3R4"/>
    </source>
</evidence>
<evidence type="ECO:0000255" key="2"/>
<evidence type="ECO:0000256" key="3">
    <source>
        <dbReference type="SAM" id="MobiDB-lite"/>
    </source>
</evidence>
<evidence type="ECO:0000269" key="4">
    <source>
    </source>
</evidence>
<evidence type="ECO:0000269" key="5">
    <source>
    </source>
</evidence>
<evidence type="ECO:0000269" key="6">
    <source>
    </source>
</evidence>
<evidence type="ECO:0000303" key="7">
    <source>
    </source>
</evidence>
<evidence type="ECO:0000305" key="8"/>
<evidence type="ECO:0000305" key="9">
    <source>
    </source>
</evidence>
<evidence type="ECO:0000305" key="10">
    <source>
    </source>
</evidence>
<accession>Q96S06</accession>
<accession>B3KS80</accession>
<accession>Q68CJ3</accession>
<accession>Q96FJ4</accession>
<accession>Q9H6G4</accession>
<accession>Q9H9K7</accession>
<proteinExistence type="evidence at protein level"/>
<organism>
    <name type="scientific">Homo sapiens</name>
    <name type="common">Human</name>
    <dbReference type="NCBI Taxonomy" id="9606"/>
    <lineage>
        <taxon>Eukaryota</taxon>
        <taxon>Metazoa</taxon>
        <taxon>Chordata</taxon>
        <taxon>Craniata</taxon>
        <taxon>Vertebrata</taxon>
        <taxon>Euteleostomi</taxon>
        <taxon>Mammalia</taxon>
        <taxon>Eutheria</taxon>
        <taxon>Euarchontoglires</taxon>
        <taxon>Primates</taxon>
        <taxon>Haplorrhini</taxon>
        <taxon>Catarrhini</taxon>
        <taxon>Hominidae</taxon>
        <taxon>Homo</taxon>
    </lineage>
</organism>
<protein>
    <recommendedName>
        <fullName>Lipase maturation factor 1</fullName>
    </recommendedName>
    <alternativeName>
        <fullName>Transmembrane protein 112</fullName>
    </alternativeName>
</protein>
<sequence length="567" mass="64873">MRPDSPTMAAPAESLRRRKTGYSDPEPESPPAPGRGPAGSPAHLHTGTFWLTRIVLLKALAFVYFVAFLVAFHQNKQLIGDRGLLPCRVFLKNFQQYFQDRTSWEVFSYMPTILWLMDWSDMNSNLDLLALLGLGISSFVLITGCANMLLMAALWGLYMSLVNVGHVWYSFGWESQLLETGFLGIFLCPLWTLSRLPQHTPTSRIVLWGFRWLIFRIMLGAGLIKIRGDRCWRDLTCMDFHYETQPMPNPVAYYLHHSPWWFHRFETLSNHFIELLVPFFLFLGRRACIIHGVLQILFQAVLIVSGNLSFLNWLTMVPSLACFDDATLGFLFPSGPGSLKDRVLQMQRDIRGARPEPRFGSVVRRAANVSLGVLLAWLSVPVVLNLLSSRQVMNTHFNSLHIVNTYGAFGSITKERAEVILQGTASSNASAPDAMWEDYEFKCKPGDPSRRPCLISPYHYRLDWLMWFAAFQTYEHNDWIIHLAGKLLASDAEALSLLAHNPFAGRPPPRWVRGEHYRYKFSRPGGRHAAEGKWWVRKRIGAYFPPLSLEELRPYFRDRGWPLPGPL</sequence>
<feature type="chain" id="PRO_0000276739" description="Lipase maturation factor 1">
    <location>
        <begin position="1"/>
        <end position="567"/>
    </location>
</feature>
<feature type="topological domain" description="Cytoplasmic" evidence="2">
    <location>
        <begin position="1"/>
        <end position="49"/>
    </location>
</feature>
<feature type="transmembrane region" description="Helical" evidence="2">
    <location>
        <begin position="50"/>
        <end position="72"/>
    </location>
</feature>
<feature type="topological domain" description="Lumenal" evidence="2">
    <location>
        <begin position="73"/>
        <end position="127"/>
    </location>
</feature>
<feature type="transmembrane region" description="Helical" evidence="2">
    <location>
        <begin position="128"/>
        <end position="151"/>
    </location>
</feature>
<feature type="topological domain" description="Cytoplasmic" evidence="2">
    <location>
        <begin position="152"/>
        <end position="207"/>
    </location>
</feature>
<feature type="transmembrane region" description="Helical" evidence="2">
    <location>
        <begin position="208"/>
        <end position="221"/>
    </location>
</feature>
<feature type="topological domain" description="Lumenal" evidence="2">
    <location>
        <begin position="222"/>
        <end position="292"/>
    </location>
</feature>
<feature type="transmembrane region" description="Helical" evidence="2">
    <location>
        <begin position="293"/>
        <end position="321"/>
    </location>
</feature>
<feature type="topological domain" description="Cytoplasmic" evidence="2">
    <location>
        <begin position="322"/>
        <end position="367"/>
    </location>
</feature>
<feature type="transmembrane region" description="Helical" evidence="2">
    <location>
        <begin position="368"/>
        <end position="388"/>
    </location>
</feature>
<feature type="topological domain" description="Lumenal" evidence="2">
    <location>
        <begin position="389"/>
        <end position="567"/>
    </location>
</feature>
<feature type="region of interest" description="Disordered" evidence="3">
    <location>
        <begin position="1"/>
        <end position="39"/>
    </location>
</feature>
<feature type="splice variant" id="VSP_057388" description="In isoform 2." evidence="7">
    <location>
        <begin position="1"/>
        <end position="237"/>
    </location>
</feature>
<feature type="sequence variant" id="VAR_053829" description="In dbSNP:rs35663121.">
    <original>V</original>
    <variation>A</variation>
    <location>
        <position position="164"/>
    </location>
</feature>
<feature type="sequence variant" id="VAR_030487" description="In dbSNP:rs11540337." evidence="4">
    <original>S</original>
    <variation>P</variation>
    <location>
        <position position="203"/>
    </location>
</feature>
<feature type="sequence variant" id="VAR_053830" description="In dbSNP:rs35168378.">
    <original>R</original>
    <variation>Q</variation>
    <location>
        <position position="364"/>
    </location>
</feature>
<feature type="sequence variant" id="VAR_030488" description="In dbSNP:rs4984948.">
    <original>P</original>
    <variation>R</variation>
    <location>
        <position position="562"/>
    </location>
</feature>
<feature type="sequence conflict" description="In Ref. 1; BAB15295 and 3; BAD38655." evidence="8" ref="1 3">
    <original>G</original>
    <variation>D</variation>
    <location>
        <position position="36"/>
    </location>
</feature>
<feature type="sequence conflict" description="In Ref. 1; BAB14218." evidence="8" ref="1">
    <original>N</original>
    <variation>D</variation>
    <location>
        <position position="93"/>
    </location>
</feature>
<reference key="1">
    <citation type="journal article" date="2004" name="Nat. Genet.">
        <title>Complete sequencing and characterization of 21,243 full-length human cDNAs.</title>
        <authorList>
            <person name="Ota T."/>
            <person name="Suzuki Y."/>
            <person name="Nishikawa T."/>
            <person name="Otsuki T."/>
            <person name="Sugiyama T."/>
            <person name="Irie R."/>
            <person name="Wakamatsu A."/>
            <person name="Hayashi K."/>
            <person name="Sato H."/>
            <person name="Nagai K."/>
            <person name="Kimura K."/>
            <person name="Makita H."/>
            <person name="Sekine M."/>
            <person name="Obayashi M."/>
            <person name="Nishi T."/>
            <person name="Shibahara T."/>
            <person name="Tanaka T."/>
            <person name="Ishii S."/>
            <person name="Yamamoto J."/>
            <person name="Saito K."/>
            <person name="Kawai Y."/>
            <person name="Isono Y."/>
            <person name="Nakamura Y."/>
            <person name="Nagahari K."/>
            <person name="Murakami K."/>
            <person name="Yasuda T."/>
            <person name="Iwayanagi T."/>
            <person name="Wagatsuma M."/>
            <person name="Shiratori A."/>
            <person name="Sudo H."/>
            <person name="Hosoiri T."/>
            <person name="Kaku Y."/>
            <person name="Kodaira H."/>
            <person name="Kondo H."/>
            <person name="Sugawara M."/>
            <person name="Takahashi M."/>
            <person name="Kanda K."/>
            <person name="Yokoi T."/>
            <person name="Furuya T."/>
            <person name="Kikkawa E."/>
            <person name="Omura Y."/>
            <person name="Abe K."/>
            <person name="Kamihara K."/>
            <person name="Katsuta N."/>
            <person name="Sato K."/>
            <person name="Tanikawa M."/>
            <person name="Yamazaki M."/>
            <person name="Ninomiya K."/>
            <person name="Ishibashi T."/>
            <person name="Yamashita H."/>
            <person name="Murakawa K."/>
            <person name="Fujimori K."/>
            <person name="Tanai H."/>
            <person name="Kimata M."/>
            <person name="Watanabe M."/>
            <person name="Hiraoka S."/>
            <person name="Chiba Y."/>
            <person name="Ishida S."/>
            <person name="Ono Y."/>
            <person name="Takiguchi S."/>
            <person name="Watanabe S."/>
            <person name="Yosida M."/>
            <person name="Hotuta T."/>
            <person name="Kusano J."/>
            <person name="Kanehori K."/>
            <person name="Takahashi-Fujii A."/>
            <person name="Hara H."/>
            <person name="Tanase T.-O."/>
            <person name="Nomura Y."/>
            <person name="Togiya S."/>
            <person name="Komai F."/>
            <person name="Hara R."/>
            <person name="Takeuchi K."/>
            <person name="Arita M."/>
            <person name="Imose N."/>
            <person name="Musashino K."/>
            <person name="Yuuki H."/>
            <person name="Oshima A."/>
            <person name="Sasaki N."/>
            <person name="Aotsuka S."/>
            <person name="Yoshikawa Y."/>
            <person name="Matsunawa H."/>
            <person name="Ichihara T."/>
            <person name="Shiohata N."/>
            <person name="Sano S."/>
            <person name="Moriya S."/>
            <person name="Momiyama H."/>
            <person name="Satoh N."/>
            <person name="Takami S."/>
            <person name="Terashima Y."/>
            <person name="Suzuki O."/>
            <person name="Nakagawa S."/>
            <person name="Senoh A."/>
            <person name="Mizoguchi H."/>
            <person name="Goto Y."/>
            <person name="Shimizu F."/>
            <person name="Wakebe H."/>
            <person name="Hishigaki H."/>
            <person name="Watanabe T."/>
            <person name="Sugiyama A."/>
            <person name="Takemoto M."/>
            <person name="Kawakami B."/>
            <person name="Yamazaki M."/>
            <person name="Watanabe K."/>
            <person name="Kumagai A."/>
            <person name="Itakura S."/>
            <person name="Fukuzumi Y."/>
            <person name="Fujimori Y."/>
            <person name="Komiyama M."/>
            <person name="Tashiro H."/>
            <person name="Tanigami A."/>
            <person name="Fujiwara T."/>
            <person name="Ono T."/>
            <person name="Yamada K."/>
            <person name="Fujii Y."/>
            <person name="Ozaki K."/>
            <person name="Hirao M."/>
            <person name="Ohmori Y."/>
            <person name="Kawabata A."/>
            <person name="Hikiji T."/>
            <person name="Kobatake N."/>
            <person name="Inagaki H."/>
            <person name="Ikema Y."/>
            <person name="Okamoto S."/>
            <person name="Okitani R."/>
            <person name="Kawakami T."/>
            <person name="Noguchi S."/>
            <person name="Itoh T."/>
            <person name="Shigeta K."/>
            <person name="Senba T."/>
            <person name="Matsumura K."/>
            <person name="Nakajima Y."/>
            <person name="Mizuno T."/>
            <person name="Morinaga M."/>
            <person name="Sasaki M."/>
            <person name="Togashi T."/>
            <person name="Oyama M."/>
            <person name="Hata H."/>
            <person name="Watanabe M."/>
            <person name="Komatsu T."/>
            <person name="Mizushima-Sugano J."/>
            <person name="Satoh T."/>
            <person name="Shirai Y."/>
            <person name="Takahashi Y."/>
            <person name="Nakagawa K."/>
            <person name="Okumura K."/>
            <person name="Nagase T."/>
            <person name="Nomura N."/>
            <person name="Kikuchi H."/>
            <person name="Masuho Y."/>
            <person name="Yamashita R."/>
            <person name="Nakai K."/>
            <person name="Yada T."/>
            <person name="Nakamura Y."/>
            <person name="Ohara O."/>
            <person name="Isogai T."/>
            <person name="Sugano S."/>
        </authorList>
    </citation>
    <scope>NUCLEOTIDE SEQUENCE [LARGE SCALE MRNA] (ISOFORMS 1 AND 2)</scope>
    <source>
        <tissue>Kidney epithelium</tissue>
        <tissue>Teratocarcinoma</tissue>
        <tissue>Testis</tissue>
    </source>
</reference>
<reference key="2">
    <citation type="journal article" date="2001" name="Hum. Mol. Genet.">
        <title>Sequence, structure and pathology of the fully annotated terminal 2 Mb of the short arm of human chromosome 16.</title>
        <authorList>
            <person name="Daniels R.J."/>
            <person name="Peden J.F."/>
            <person name="Lloyd C."/>
            <person name="Horsley S.W."/>
            <person name="Clark K."/>
            <person name="Tufarelli C."/>
            <person name="Kearney L."/>
            <person name="Buckle V.J."/>
            <person name="Doggett N.A."/>
            <person name="Flint J."/>
            <person name="Higgs D.R."/>
        </authorList>
    </citation>
    <scope>NUCLEOTIDE SEQUENCE [LARGE SCALE GENOMIC DNA]</scope>
</reference>
<reference key="3">
    <citation type="journal article" date="2004" name="Nature">
        <title>The sequence and analysis of duplication-rich human chromosome 16.</title>
        <authorList>
            <person name="Martin J."/>
            <person name="Han C."/>
            <person name="Gordon L.A."/>
            <person name="Terry A."/>
            <person name="Prabhakar S."/>
            <person name="She X."/>
            <person name="Xie G."/>
            <person name="Hellsten U."/>
            <person name="Chan Y.M."/>
            <person name="Altherr M."/>
            <person name="Couronne O."/>
            <person name="Aerts A."/>
            <person name="Bajorek E."/>
            <person name="Black S."/>
            <person name="Blumer H."/>
            <person name="Branscomb E."/>
            <person name="Brown N.C."/>
            <person name="Bruno W.J."/>
            <person name="Buckingham J.M."/>
            <person name="Callen D.F."/>
            <person name="Campbell C.S."/>
            <person name="Campbell M.L."/>
            <person name="Campbell E.W."/>
            <person name="Caoile C."/>
            <person name="Challacombe J.F."/>
            <person name="Chasteen L.A."/>
            <person name="Chertkov O."/>
            <person name="Chi H.C."/>
            <person name="Christensen M."/>
            <person name="Clark L.M."/>
            <person name="Cohn J.D."/>
            <person name="Denys M."/>
            <person name="Detter J.C."/>
            <person name="Dickson M."/>
            <person name="Dimitrijevic-Bussod M."/>
            <person name="Escobar J."/>
            <person name="Fawcett J.J."/>
            <person name="Flowers D."/>
            <person name="Fotopulos D."/>
            <person name="Glavina T."/>
            <person name="Gomez M."/>
            <person name="Gonzales E."/>
            <person name="Goodstein D."/>
            <person name="Goodwin L.A."/>
            <person name="Grady D.L."/>
            <person name="Grigoriev I."/>
            <person name="Groza M."/>
            <person name="Hammon N."/>
            <person name="Hawkins T."/>
            <person name="Haydu L."/>
            <person name="Hildebrand C.E."/>
            <person name="Huang W."/>
            <person name="Israni S."/>
            <person name="Jett J."/>
            <person name="Jewett P.B."/>
            <person name="Kadner K."/>
            <person name="Kimball H."/>
            <person name="Kobayashi A."/>
            <person name="Krawczyk M.-C."/>
            <person name="Leyba T."/>
            <person name="Longmire J.L."/>
            <person name="Lopez F."/>
            <person name="Lou Y."/>
            <person name="Lowry S."/>
            <person name="Ludeman T."/>
            <person name="Manohar C.F."/>
            <person name="Mark G.A."/>
            <person name="McMurray K.L."/>
            <person name="Meincke L.J."/>
            <person name="Morgan J."/>
            <person name="Moyzis R.K."/>
            <person name="Mundt M.O."/>
            <person name="Munk A.C."/>
            <person name="Nandkeshwar R.D."/>
            <person name="Pitluck S."/>
            <person name="Pollard M."/>
            <person name="Predki P."/>
            <person name="Parson-Quintana B."/>
            <person name="Ramirez L."/>
            <person name="Rash S."/>
            <person name="Retterer J."/>
            <person name="Ricke D.O."/>
            <person name="Robinson D.L."/>
            <person name="Rodriguez A."/>
            <person name="Salamov A."/>
            <person name="Saunders E.H."/>
            <person name="Scott D."/>
            <person name="Shough T."/>
            <person name="Stallings R.L."/>
            <person name="Stalvey M."/>
            <person name="Sutherland R.D."/>
            <person name="Tapia R."/>
            <person name="Tesmer J.G."/>
            <person name="Thayer N."/>
            <person name="Thompson L.S."/>
            <person name="Tice H."/>
            <person name="Torney D.C."/>
            <person name="Tran-Gyamfi M."/>
            <person name="Tsai M."/>
            <person name="Ulanovsky L.E."/>
            <person name="Ustaszewska A."/>
            <person name="Vo N."/>
            <person name="White P.S."/>
            <person name="Williams A.L."/>
            <person name="Wills P.L."/>
            <person name="Wu J.-R."/>
            <person name="Wu K."/>
            <person name="Yang J."/>
            <person name="DeJong P."/>
            <person name="Bruce D."/>
            <person name="Doggett N.A."/>
            <person name="Deaven L."/>
            <person name="Schmutz J."/>
            <person name="Grimwood J."/>
            <person name="Richardson P."/>
            <person name="Rokhsar D.S."/>
            <person name="Eichler E.E."/>
            <person name="Gilna P."/>
            <person name="Lucas S.M."/>
            <person name="Myers R.M."/>
            <person name="Rubin E.M."/>
            <person name="Pennacchio L.A."/>
        </authorList>
    </citation>
    <scope>NUCLEOTIDE SEQUENCE [LARGE SCALE GENOMIC DNA]</scope>
</reference>
<reference key="4">
    <citation type="submission" date="2005-09" db="EMBL/GenBank/DDBJ databases">
        <authorList>
            <person name="Mural R.J."/>
            <person name="Istrail S."/>
            <person name="Sutton G."/>
            <person name="Florea L."/>
            <person name="Halpern A.L."/>
            <person name="Mobarry C.M."/>
            <person name="Lippert R."/>
            <person name="Walenz B."/>
            <person name="Shatkay H."/>
            <person name="Dew I."/>
            <person name="Miller J.R."/>
            <person name="Flanigan M.J."/>
            <person name="Edwards N.J."/>
            <person name="Bolanos R."/>
            <person name="Fasulo D."/>
            <person name="Halldorsson B.V."/>
            <person name="Hannenhalli S."/>
            <person name="Turner R."/>
            <person name="Yooseph S."/>
            <person name="Lu F."/>
            <person name="Nusskern D.R."/>
            <person name="Shue B.C."/>
            <person name="Zheng X.H."/>
            <person name="Zhong F."/>
            <person name="Delcher A.L."/>
            <person name="Huson D.H."/>
            <person name="Kravitz S.A."/>
            <person name="Mouchard L."/>
            <person name="Reinert K."/>
            <person name="Remington K.A."/>
            <person name="Clark A.G."/>
            <person name="Waterman M.S."/>
            <person name="Eichler E.E."/>
            <person name="Adams M.D."/>
            <person name="Hunkapiller M.W."/>
            <person name="Myers E.W."/>
            <person name="Venter J.C."/>
        </authorList>
    </citation>
    <scope>NUCLEOTIDE SEQUENCE [LARGE SCALE GENOMIC DNA]</scope>
</reference>
<reference key="5">
    <citation type="journal article" date="2004" name="Oncogene">
        <title>Expression profiling and differential screening between hepatoblastomas and the corresponding normal livers: identification of high expression of the PLK1 oncogene as a poor-prognostic indicator of hepatoblastomas.</title>
        <authorList>
            <person name="Yamada S."/>
            <person name="Ohira M."/>
            <person name="Horie H."/>
            <person name="Ando K."/>
            <person name="Takayasu H."/>
            <person name="Suzuki Y."/>
            <person name="Sugano S."/>
            <person name="Hirata T."/>
            <person name="Goto T."/>
            <person name="Matsunaga T."/>
            <person name="Hiyama E."/>
            <person name="Hayashi Y."/>
            <person name="Ando H."/>
            <person name="Suita S."/>
            <person name="Kaneko M."/>
            <person name="Sasaki F."/>
            <person name="Hashizume K."/>
            <person name="Ohnuma N."/>
            <person name="Nakagawara A."/>
        </authorList>
    </citation>
    <scope>NUCLEOTIDE SEQUENCE [MRNA] OF 5-567 (ISOFORM 1)</scope>
    <source>
        <tissue>Hepatoblastoma</tissue>
    </source>
</reference>
<reference key="6">
    <citation type="journal article" date="2004" name="Genome Res.">
        <title>The status, quality, and expansion of the NIH full-length cDNA project: the Mammalian Gene Collection (MGC).</title>
        <authorList>
            <consortium name="The MGC Project Team"/>
        </authorList>
    </citation>
    <scope>NUCLEOTIDE SEQUENCE [LARGE SCALE MRNA] OF 78-567 (ISOFORM 1)</scope>
    <scope>VARIANT PRO-203</scope>
    <source>
        <tissue>Pancreas</tissue>
    </source>
</reference>
<reference key="7">
    <citation type="journal article" date="2007" name="Nat. Genet.">
        <title>Mutations in LMF1 cause combined lipase deficiency and severe hypertriglyceridemia.</title>
        <authorList>
            <person name="Peterfy M."/>
            <person name="Ben-Zeev O."/>
            <person name="Mao H.Z."/>
            <person name="Weissglas-Volkov D."/>
            <person name="Aouizerat B.E."/>
            <person name="Pullinger C.R."/>
            <person name="Frost P.H."/>
            <person name="Kane J.P."/>
            <person name="Malloy M.J."/>
            <person name="Reue K."/>
            <person name="Pajukanta P."/>
            <person name="Doolittle M.H."/>
        </authorList>
    </citation>
    <scope>INVOLVEMENT IN CLD</scope>
</reference>
<reference key="8">
    <citation type="journal article" date="2009" name="J. Biol. Chem.">
        <title>Lipase maturation factor LMF1, membrane topology and interaction with lipase proteins in the endoplasmic reticulum.</title>
        <authorList>
            <person name="Doolittle M.H."/>
            <person name="Neher S.B."/>
            <person name="Ben-Zeev O."/>
            <person name="Ling-Liao J."/>
            <person name="Gallagher C.M."/>
            <person name="Hosseini M."/>
            <person name="Yin F."/>
            <person name="Wong H."/>
            <person name="Walter P."/>
            <person name="Peterfy M."/>
        </authorList>
    </citation>
    <scope>RETRACTED PAPER</scope>
</reference>
<reference key="9">
    <citation type="journal article" date="2019" name="J. Biol. Chem.">
        <authorList>
            <person name="Doolittle M.H."/>
            <person name="Neher S.B."/>
            <person name="Ben-Zeev O."/>
            <person name="Ling-Liao J."/>
            <person name="Gallagher C.M."/>
            <person name="Hosseini M."/>
            <person name="Yin F."/>
            <person name="Wong H."/>
            <person name="Walter P."/>
            <person name="Peterfy M."/>
        </authorList>
    </citation>
    <scope>RETRACTION NOTICE OF PUBMED:19783858</scope>
</reference>
<reference key="10">
    <citation type="journal article" date="2014" name="Biochem. Biophys. Res. Commun.">
        <title>Purification, cellular levels, and functional domains of lipase maturation factor 1.</title>
        <authorList>
            <person name="Babilonia-Rosa M.A."/>
            <person name="Neher S.B."/>
        </authorList>
    </citation>
    <scope>FUNCTION</scope>
    <scope>SUBCELLULAR LOCATION</scope>
    <scope>TOPOLOGY</scope>
</reference>
<comment type="function">
    <text evidence="1 6">Involved in the maturation of specific proteins in the endoplasmic reticulum. Required for maturation and transport of active lipoprotein lipase (LPL) through the secretory pathway. Each LMF1 molecule chaperones 50 or more molecules of LPL.</text>
</comment>
<comment type="subunit">
    <text evidence="1">Interacts with LPL and SEL1L.</text>
</comment>
<comment type="subcellular location">
    <subcellularLocation>
        <location evidence="6">Endoplasmic reticulum membrane</location>
        <topology evidence="6">Multi-pass membrane protein</topology>
    </subcellularLocation>
</comment>
<comment type="alternative products">
    <event type="alternative splicing"/>
    <isoform>
        <id>Q96S06-1</id>
        <name>1</name>
        <sequence type="displayed"/>
    </isoform>
    <isoform>
        <id>Q96S06-2</id>
        <name>2</name>
        <sequence type="described" ref="VSP_057388"/>
    </isoform>
</comment>
<comment type="disease" evidence="5">
    <disease id="DI-01363">
        <name>Combined lipase deficiency</name>
        <acronym>CLD</acronym>
        <description>Characterized by repeated episodes of pancreatitis, tuberous xanthomas and lipodystrophy and is caused by deficiency of both lipoprotein lipase (LPL) and hepatic triglyceride lipase (HTGL).</description>
        <dbReference type="MIM" id="246650"/>
    </disease>
    <text>The disease is caused by variants affecting the gene represented in this entry.</text>
</comment>
<comment type="similarity">
    <text evidence="8">Belongs to the lipase maturation factor family.</text>
</comment>
<comment type="caution">
    <text evidence="9 10">Additional evidence for its localization to the endoplasmic reticulum membrane was found. However this paper was retracted due to manipulation of data.</text>
</comment>
<comment type="sequence caution" evidence="8">
    <conflict type="erroneous initiation">
        <sequence resource="EMBL-CDS" id="BAB15295"/>
    </conflict>
</comment>
<name>LMF1_HUMAN</name>